<protein>
    <recommendedName>
        <fullName>Uncharacterized protein HI_1198</fullName>
    </recommendedName>
</protein>
<dbReference type="EMBL" id="L42023">
    <property type="protein sequence ID" value="AAC22852.1"/>
    <property type="molecule type" value="Genomic_DNA"/>
</dbReference>
<dbReference type="PIR" id="I64168">
    <property type="entry name" value="I64168"/>
</dbReference>
<dbReference type="RefSeq" id="NP_439354.1">
    <property type="nucleotide sequence ID" value="NC_000907.1"/>
</dbReference>
<dbReference type="SMR" id="P45103"/>
<dbReference type="STRING" id="71421.HI_1198"/>
<dbReference type="EnsemblBacteria" id="AAC22852">
    <property type="protein sequence ID" value="AAC22852"/>
    <property type="gene ID" value="HI_1198"/>
</dbReference>
<dbReference type="KEGG" id="hin:HI_1198"/>
<dbReference type="PATRIC" id="fig|71421.8.peg.1250"/>
<dbReference type="eggNOG" id="COG0009">
    <property type="taxonomic scope" value="Bacteria"/>
</dbReference>
<dbReference type="HOGENOM" id="CLU_031397_3_0_6"/>
<dbReference type="OrthoDB" id="9781656at2"/>
<dbReference type="PhylomeDB" id="P45103"/>
<dbReference type="BioCyc" id="HINF71421:G1GJ1-1229-MONOMER"/>
<dbReference type="Proteomes" id="UP000000579">
    <property type="component" value="Chromosome"/>
</dbReference>
<dbReference type="GO" id="GO:0003725">
    <property type="term" value="F:double-stranded RNA binding"/>
    <property type="evidence" value="ECO:0007669"/>
    <property type="project" value="InterPro"/>
</dbReference>
<dbReference type="Gene3D" id="3.90.870.10">
    <property type="entry name" value="DHBP synthase"/>
    <property type="match status" value="1"/>
</dbReference>
<dbReference type="InterPro" id="IPR017945">
    <property type="entry name" value="DHBP_synth_RibB-like_a/b_dom"/>
</dbReference>
<dbReference type="InterPro" id="IPR006070">
    <property type="entry name" value="Sua5-like_dom"/>
</dbReference>
<dbReference type="InterPro" id="IPR052532">
    <property type="entry name" value="SUA5_domain"/>
</dbReference>
<dbReference type="NCBIfam" id="TIGR00057">
    <property type="entry name" value="L-threonylcarbamoyladenylate synthase"/>
    <property type="match status" value="1"/>
</dbReference>
<dbReference type="PANTHER" id="PTHR42828">
    <property type="entry name" value="DHBP SYNTHASE RIBB-LIKE ALPHA/BETA DOMAIN-CONTAINING PROTEIN"/>
    <property type="match status" value="1"/>
</dbReference>
<dbReference type="PANTHER" id="PTHR42828:SF3">
    <property type="entry name" value="THREONYLCARBAMOYL-AMP SYNTHASE"/>
    <property type="match status" value="1"/>
</dbReference>
<dbReference type="Pfam" id="PF01300">
    <property type="entry name" value="Sua5_yciO_yrdC"/>
    <property type="match status" value="1"/>
</dbReference>
<dbReference type="SUPFAM" id="SSF55821">
    <property type="entry name" value="YrdC/RibB"/>
    <property type="match status" value="1"/>
</dbReference>
<dbReference type="PROSITE" id="PS51163">
    <property type="entry name" value="YRDC"/>
    <property type="match status" value="1"/>
</dbReference>
<feature type="chain" id="PRO_0000202017" description="Uncharacterized protein HI_1198">
    <location>
        <begin position="1"/>
        <end position="207"/>
    </location>
</feature>
<feature type="domain" description="YrdC-like" evidence="1">
    <location>
        <begin position="14"/>
        <end position="201"/>
    </location>
</feature>
<name>Y1198_HAEIN</name>
<reference key="1">
    <citation type="journal article" date="1995" name="Science">
        <title>Whole-genome random sequencing and assembly of Haemophilus influenzae Rd.</title>
        <authorList>
            <person name="Fleischmann R.D."/>
            <person name="Adams M.D."/>
            <person name="White O."/>
            <person name="Clayton R.A."/>
            <person name="Kirkness E.F."/>
            <person name="Kerlavage A.R."/>
            <person name="Bult C.J."/>
            <person name="Tomb J.-F."/>
            <person name="Dougherty B.A."/>
            <person name="Merrick J.M."/>
            <person name="McKenney K."/>
            <person name="Sutton G.G."/>
            <person name="FitzHugh W."/>
            <person name="Fields C.A."/>
            <person name="Gocayne J.D."/>
            <person name="Scott J.D."/>
            <person name="Shirley R."/>
            <person name="Liu L.-I."/>
            <person name="Glodek A."/>
            <person name="Kelley J.M."/>
            <person name="Weidman J.F."/>
            <person name="Phillips C.A."/>
            <person name="Spriggs T."/>
            <person name="Hedblom E."/>
            <person name="Cotton M.D."/>
            <person name="Utterback T.R."/>
            <person name="Hanna M.C."/>
            <person name="Nguyen D.T."/>
            <person name="Saudek D.M."/>
            <person name="Brandon R.C."/>
            <person name="Fine L.D."/>
            <person name="Fritchman J.L."/>
            <person name="Fuhrmann J.L."/>
            <person name="Geoghagen N.S.M."/>
            <person name="Gnehm C.L."/>
            <person name="McDonald L.A."/>
            <person name="Small K.V."/>
            <person name="Fraser C.M."/>
            <person name="Smith H.O."/>
            <person name="Venter J.C."/>
        </authorList>
    </citation>
    <scope>NUCLEOTIDE SEQUENCE [LARGE SCALE GENOMIC DNA]</scope>
    <source>
        <strain>ATCC 51907 / DSM 11121 / KW20 / Rd</strain>
    </source>
</reference>
<organism>
    <name type="scientific">Haemophilus influenzae (strain ATCC 51907 / DSM 11121 / KW20 / Rd)</name>
    <dbReference type="NCBI Taxonomy" id="71421"/>
    <lineage>
        <taxon>Bacteria</taxon>
        <taxon>Pseudomonadati</taxon>
        <taxon>Pseudomonadota</taxon>
        <taxon>Gammaproteobacteria</taxon>
        <taxon>Pasteurellales</taxon>
        <taxon>Pasteurellaceae</taxon>
        <taxon>Haemophilus</taxon>
    </lineage>
</organism>
<gene>
    <name type="ordered locus">HI_1198</name>
</gene>
<accession>P45103</accession>
<evidence type="ECO:0000255" key="1">
    <source>
        <dbReference type="PROSITE-ProRule" id="PRU00518"/>
    </source>
</evidence>
<evidence type="ECO:0000305" key="2"/>
<comment type="similarity">
    <text evidence="2">Belongs to the SUA5 family.</text>
</comment>
<proteinExistence type="inferred from homology"/>
<keyword id="KW-1185">Reference proteome</keyword>
<sequence length="207" mass="23092">MSQFFYIHPENPQARLINQAVEILQKGGVIVYPTDSGYALGCMMGDKHAMDRIVAIRKLPEGHNFTLVCSDLSELSTYARVNNTAYRLIKNNTPGRYTFILTATKELPRRLMTSKRKTIGLRVPDNKIALDLLSALGEPILSCSLMLPNEEHTTQSDPEEIRDRLEHQVDLIIHGGYLGQEPTTVVDLTEESPVILREGSGSTAPFI</sequence>